<reference key="1">
    <citation type="journal article" date="1995" name="Virology">
        <title>Nucleotide sequence of a single-stranded RNA phage from Pseudomonas aeruginosa: kinship to coliphages and conservation of regulatory RNA structures.</title>
        <authorList>
            <person name="Olsthoorn R.C."/>
            <person name="Garde G."/>
            <person name="Dayhuff T."/>
            <person name="Atkins J.F."/>
            <person name="Van Duin J."/>
        </authorList>
    </citation>
    <scope>NUCLEOTIDE SEQUENCE [GENOMIC RNA]</scope>
</reference>
<reference key="2">
    <citation type="journal article" date="1979" name="Nucleic Acids Res.">
        <title>Initiation of translation with Pseudomonas aeruginosa phage PP7 RNA: nucleotide sequence of the coat cistron ribosome binding site.</title>
        <authorList>
            <person name="Bassel B.A."/>
            <person name="Mills D.R."/>
        </authorList>
    </citation>
    <scope>PROTEIN SEQUENCE OF 2-6</scope>
    <scope>SUBCELLULAR LOCATION</scope>
</reference>
<reference key="3">
    <citation type="journal article" date="1980" name="Biochem. Biophys. Res. Commun.">
        <title>Complete amino acid sequence of the coat protein of the Pseudomonas aeruginosa RNA bacteriophage PP7.</title>
        <authorList>
            <person name="Dhaese P."/>
            <person name="Lenaerts A."/>
            <person name="Gielen J."/>
            <person name="van Montagu M."/>
        </authorList>
    </citation>
    <scope>PROTEIN SEQUENCE OF 2-128</scope>
</reference>
<reference key="4">
    <citation type="journal article" date="2001" name="J. Biol. Chem.">
        <title>Translational repression and specific RNA binding by the coat protein of the Pseudomonas phage PP7.</title>
        <authorList>
            <person name="Lim F."/>
            <person name="Downey T.P."/>
            <person name="Peabody D.S."/>
        </authorList>
    </citation>
    <scope>RNA-BINDING</scope>
    <scope>MUTAGENESIS OF ARG-40; ARG-46; ALA-53; ARG-55; LYS-59; ASP-61; VAL-84; SER-86 AND THR-90</scope>
    <scope>SUBUNIT</scope>
    <scope>FUNCTION</scope>
</reference>
<reference key="5">
    <citation type="journal article" date="2002" name="Nucleic Acids Res.">
        <title>RNA recognition site of PP7 coat protein.</title>
        <authorList>
            <person name="Lim F."/>
            <person name="Peabody D.S."/>
        </authorList>
    </citation>
    <scope>RNA-BINDING</scope>
</reference>
<reference evidence="13" key="6">
    <citation type="journal article" date="2000" name="Acta Crystallogr. D">
        <title>Structure determination of bacteriophage PP7 from Pseudomonas aeruginosa: from poor data to a good map.</title>
        <authorList>
            <person name="Tars K."/>
            <person name="Fridborg K."/>
            <person name="Bundule M."/>
            <person name="Liljas L."/>
        </authorList>
    </citation>
    <scope>X-RAY CRYSTALLOGRAPHY (3.50 ANGSTROMS) OF 2-128</scope>
    <scope>FUNCTION</scope>
</reference>
<reference key="7">
    <citation type="journal article" date="2000" name="Virology">
        <title>The three-dimensional structure of bacteriophage PP7 from Pseudomonas aeruginosa at 3.7-A resolution.</title>
        <authorList>
            <person name="Tars K."/>
            <person name="Fridborg K."/>
            <person name="Bundule M."/>
            <person name="Liljas L."/>
        </authorList>
    </citation>
    <scope>X-RAY CRYSTALLOGRAPHY (3.70 ANGSTROMS) OF 2-128</scope>
    <scope>SUBUNIT</scope>
    <scope>DISULFIDE BONDS</scope>
</reference>
<reference evidence="14 15" key="8">
    <citation type="journal article" date="2008" name="Nat. Struct. Mol. Biol.">
        <title>Structural basis for the coevolution of a viral RNA-protein complex.</title>
        <authorList>
            <person name="Chao J.A."/>
            <person name="Patskovsky Y."/>
            <person name="Almo S.C."/>
            <person name="Singer R.H."/>
        </authorList>
    </citation>
    <scope>X-RAY CRYSTALLOGRAPHY (1.60 ANGSTROMS) OF 1-67 AND 76-128 IN COMPLEX WITH RNA</scope>
    <scope>SUBUNIT</scope>
    <scope>RNA-BINDING</scope>
</reference>
<reference evidence="16" key="9">
    <citation type="journal article" date="2019" name="ACS Nano">
        <title>Engineering the PP7 Virus Capsid as a Peptide Display Platform.</title>
        <authorList>
            <person name="Zhao L."/>
            <person name="Kopylov M."/>
            <person name="Potter C.S."/>
            <person name="Carragher B."/>
            <person name="Finn M.G."/>
        </authorList>
    </citation>
    <scope>STRUCTURE BY ELECTRON MICROSCOPY (3.00 ANGSTROMS) OF 2-128</scope>
    <scope>DISULFIDE BONDS</scope>
</reference>
<organismHost>
    <name type="scientific">Pseudomonas aeruginosa</name>
    <dbReference type="NCBI Taxonomy" id="287"/>
</organismHost>
<dbReference type="EMBL" id="X80191">
    <property type="protein sequence ID" value="CAA56473.1"/>
    <property type="molecule type" value="Genomic_RNA"/>
</dbReference>
<dbReference type="PIR" id="A04238">
    <property type="entry name" value="VCBPP7"/>
</dbReference>
<dbReference type="PIR" id="S46976">
    <property type="entry name" value="S46976"/>
</dbReference>
<dbReference type="RefSeq" id="NP_042305.1">
    <property type="nucleotide sequence ID" value="NC_001628.1"/>
</dbReference>
<dbReference type="PDB" id="1DWN">
    <property type="method" value="X-ray"/>
    <property type="resolution" value="3.50 A"/>
    <property type="chains" value="A/B/C=2-128"/>
</dbReference>
<dbReference type="PDB" id="2QUD">
    <property type="method" value="X-ray"/>
    <property type="resolution" value="1.60 A"/>
    <property type="chains" value="A/B=1-67, A/B=76-128"/>
</dbReference>
<dbReference type="PDB" id="2QUX">
    <property type="method" value="X-ray"/>
    <property type="resolution" value="2.44 A"/>
    <property type="chains" value="A/B/D/E/G/H/J/K/M/N/P/Q=1-67, A/B/D/E/G/H/J/K/M/N/P/Q=76-128"/>
</dbReference>
<dbReference type="PDB" id="6N4V">
    <property type="method" value="EM"/>
    <property type="resolution" value="3.00 A"/>
    <property type="chains" value="A/AA/AB/AC/AD/Af/B/BA/BB/BC/BD/C/CA/CB/CC/CD/D/DA/DB/DC/DD/E/EA/EB/EC/ED/F/FA/FB/FC=2-128"/>
</dbReference>
<dbReference type="PDB" id="8TUX">
    <property type="method" value="EM"/>
    <property type="resolution" value="3.90 A"/>
    <property type="chains" value="01/02/11/12/21/22/2A/2B/2C/2D/2E/2F/2G/2H/2I/2J/2K/2L/2M/2N/2O/2P/2Q/2R/2S/2T/2U/2V/2W/2X=2-128"/>
</dbReference>
<dbReference type="PDBsum" id="1DWN"/>
<dbReference type="PDBsum" id="2QUD"/>
<dbReference type="PDBsum" id="2QUX"/>
<dbReference type="PDBsum" id="6N4V"/>
<dbReference type="PDBsum" id="8TUX"/>
<dbReference type="EMDB" id="EMD-0344"/>
<dbReference type="SMR" id="P03630"/>
<dbReference type="DIP" id="DIP-46398N"/>
<dbReference type="GeneID" id="1261104"/>
<dbReference type="KEGG" id="vg:1261104"/>
<dbReference type="EvolutionaryTrace" id="P03630"/>
<dbReference type="Proteomes" id="UP000002138">
    <property type="component" value="Genome"/>
</dbReference>
<dbReference type="GO" id="GO:0039617">
    <property type="term" value="C:T=3 icosahedral viral capsid"/>
    <property type="evidence" value="ECO:0007669"/>
    <property type="project" value="UniProtKB-KW"/>
</dbReference>
<dbReference type="GO" id="GO:0042802">
    <property type="term" value="F:identical protein binding"/>
    <property type="evidence" value="ECO:0000353"/>
    <property type="project" value="IntAct"/>
</dbReference>
<dbReference type="GO" id="GO:0003723">
    <property type="term" value="F:RNA binding"/>
    <property type="evidence" value="ECO:0007669"/>
    <property type="project" value="UniProtKB-KW"/>
</dbReference>
<dbReference type="GO" id="GO:0006417">
    <property type="term" value="P:regulation of translation"/>
    <property type="evidence" value="ECO:0007669"/>
    <property type="project" value="UniProtKB-KW"/>
</dbReference>
<dbReference type="FunFam" id="3.30.380.10:FF:000003">
    <property type="entry name" value="Coat protein"/>
    <property type="match status" value="1"/>
</dbReference>
<dbReference type="Gene3D" id="3.30.380.10">
    <property type="entry name" value="MS2 Viral Coat Protein"/>
    <property type="match status" value="1"/>
</dbReference>
<dbReference type="InterPro" id="IPR015148">
    <property type="entry name" value="Phage_PP7_CP"/>
</dbReference>
<dbReference type="InterPro" id="IPR015954">
    <property type="entry name" value="Phage_RNA-type_capsid"/>
</dbReference>
<dbReference type="Pfam" id="PF09063">
    <property type="entry name" value="Phage_coat"/>
    <property type="match status" value="1"/>
</dbReference>
<dbReference type="SUPFAM" id="SSF55405">
    <property type="entry name" value="RNA bacteriophage capsid protein"/>
    <property type="match status" value="1"/>
</dbReference>
<accession>P03630</accession>
<accession>Q38062</accession>
<evidence type="ECO:0000250" key="1">
    <source>
        <dbReference type="UniProtKB" id="P03612"/>
    </source>
</evidence>
<evidence type="ECO:0000269" key="2">
    <source>
    </source>
</evidence>
<evidence type="ECO:0000269" key="3">
    <source>
    </source>
</evidence>
<evidence type="ECO:0000269" key="4">
    <source>
    </source>
</evidence>
<evidence type="ECO:0000269" key="5">
    <source>
    </source>
</evidence>
<evidence type="ECO:0000269" key="6">
    <source>
    </source>
</evidence>
<evidence type="ECO:0000269" key="7">
    <source>
    </source>
</evidence>
<evidence type="ECO:0000269" key="8">
    <source>
    </source>
</evidence>
<evidence type="ECO:0000303" key="9">
    <source>
    </source>
</evidence>
<evidence type="ECO:0000303" key="10">
    <source>
    </source>
</evidence>
<evidence type="ECO:0000305" key="11"/>
<evidence type="ECO:0000305" key="12">
    <source>
    </source>
</evidence>
<evidence type="ECO:0007829" key="13">
    <source>
        <dbReference type="PDB" id="1DWN"/>
    </source>
</evidence>
<evidence type="ECO:0007829" key="14">
    <source>
        <dbReference type="PDB" id="2QUD"/>
    </source>
</evidence>
<evidence type="ECO:0007829" key="15">
    <source>
        <dbReference type="PDB" id="2QUX"/>
    </source>
</evidence>
<evidence type="ECO:0007829" key="16">
    <source>
        <dbReference type="PDB" id="6N4V"/>
    </source>
</evidence>
<organism>
    <name type="scientific">Pseudomonas phage PP7</name>
    <name type="common">Bacteriophage PP7</name>
    <dbReference type="NCBI Taxonomy" id="12023"/>
    <lineage>
        <taxon>Viruses</taxon>
        <taxon>Riboviria</taxon>
        <taxon>Orthornavirae</taxon>
        <taxon>Lenarviricota</taxon>
        <taxon>Leviviricetes</taxon>
        <taxon>Norzivirales</taxon>
        <taxon>Fiersviridae</taxon>
        <taxon>Pepevirus</taxon>
        <taxon>Pepevirus rubrum</taxon>
    </lineage>
</organism>
<sequence length="128" mass="14021">MSKTIVLSVGEATRTLTEIQSTADRQIFEEKVGPLVGRLRLTASLRQNGAKTAYRVNLKLDQADVVDCSTSVCGELPKVRYTQVWSHDVTIVANSTEASRKSLYDLTKSLVATSQVEDLVVNLVPLGR</sequence>
<proteinExistence type="evidence at protein level"/>
<keyword id="KW-0002">3D-structure</keyword>
<keyword id="KW-0167">Capsid protein</keyword>
<keyword id="KW-0903">Direct protein sequencing</keyword>
<keyword id="KW-1015">Disulfide bond</keyword>
<keyword id="KW-1185">Reference proteome</keyword>
<keyword id="KW-0694">RNA-binding</keyword>
<keyword id="KW-1142">T=3 icosahedral capsid protein</keyword>
<keyword id="KW-0810">Translation regulation</keyword>
<keyword id="KW-0946">Virion</keyword>
<name>CAPSD_BPPP7</name>
<protein>
    <recommendedName>
        <fullName evidence="11">Capsid protein</fullName>
        <shortName>CP</shortName>
    </recommendedName>
    <alternativeName>
        <fullName evidence="9 10">Coat protein</fullName>
    </alternativeName>
</protein>
<comment type="function">
    <text evidence="1 2">Capsid protein self-assembles to form an icosahedral capsid with a T=3 symmetry, about 26 nm in diameter, and consisting of 89 capsid proteins dimers (178 capsid proteins) (PubMed:10739912). Involved in viral genome encapsidation through the interaction between a capsid protein dimer and the multiple packaging signals present in the RNA genome (By similarity).</text>
</comment>
<comment type="function">
    <text evidence="5">Acts as a translational repressor of viral replicase synthesis late in infection. This latter function is the result of capsid protein interaction with an RNA hairpin which contains the replicase ribosome-binding site.</text>
</comment>
<comment type="subunit">
    <text evidence="3 5 6 7 12">Homodimer (PubMed:10873776, PubMed:11306589, PubMed:18066080). The dimers in the capsid are covalently linked with disulfide bridges (PubMed:10873776, PubMed:30912918). The homodimers binds to the viral RNA via an operator hairpin, but also to many other RNA sequences in the viral genome; this interaction probably shifts the virus from the replicative to the assembly phase and ensures specific encapsidation of the viral genome (Probable).</text>
</comment>
<comment type="interaction">
    <interactant intactId="EBI-15674609">
        <id>P03630</id>
    </interactant>
    <interactant intactId="EBI-15674609">
        <id>P03630</id>
        <label>-</label>
    </interactant>
    <organismsDiffer>false</organismsDiffer>
    <experiments>2</experiments>
</comment>
<comment type="subcellular location">
    <subcellularLocation>
        <location evidence="4">Virion</location>
    </subcellularLocation>
    <text evidence="1">The shell is composed of 178 copies of the capsid protein and 1 copy of the maturation protein.</text>
</comment>
<comment type="similarity">
    <text evidence="11">Belongs to the Leviviricetes capsid protein family.</text>
</comment>
<feature type="initiator methionine" description="Removed" evidence="4 8">
    <location>
        <position position="1"/>
    </location>
</feature>
<feature type="chain" id="PRO_0000164844" description="Capsid protein">
    <location>
        <begin position="2"/>
        <end position="127"/>
    </location>
</feature>
<feature type="binding site" evidence="5">
    <location>
        <position position="40"/>
    </location>
    <ligand>
        <name>RNA</name>
        <dbReference type="ChEBI" id="CHEBI:33697"/>
    </ligand>
</feature>
<feature type="binding site" evidence="5">
    <location>
        <position position="46"/>
    </location>
    <ligand>
        <name>RNA</name>
        <dbReference type="ChEBI" id="CHEBI:33697"/>
    </ligand>
</feature>
<feature type="binding site" evidence="5">
    <location>
        <position position="53"/>
    </location>
    <ligand>
        <name>RNA</name>
        <dbReference type="ChEBI" id="CHEBI:33697"/>
    </ligand>
</feature>
<feature type="binding site" evidence="5 6">
    <location>
        <position position="55"/>
    </location>
    <ligand>
        <name>RNA</name>
        <dbReference type="ChEBI" id="CHEBI:33697"/>
    </ligand>
</feature>
<feature type="binding site" evidence="5 6">
    <location>
        <position position="59"/>
    </location>
    <ligand>
        <name>RNA</name>
        <dbReference type="ChEBI" id="CHEBI:33697"/>
    </ligand>
</feature>
<feature type="binding site" evidence="5">
    <location>
        <position position="61"/>
    </location>
    <ligand>
        <name>RNA</name>
        <dbReference type="ChEBI" id="CHEBI:33697"/>
    </ligand>
</feature>
<feature type="binding site" evidence="5 6">
    <location>
        <position position="84"/>
    </location>
    <ligand>
        <name>RNA</name>
        <dbReference type="ChEBI" id="CHEBI:33697"/>
    </ligand>
</feature>
<feature type="binding site" evidence="5 6">
    <location>
        <position position="86"/>
    </location>
    <ligand>
        <name>RNA</name>
        <dbReference type="ChEBI" id="CHEBI:33697"/>
    </ligand>
</feature>
<feature type="binding site" evidence="5 6">
    <location>
        <position position="90"/>
    </location>
    <ligand>
        <name>RNA</name>
        <dbReference type="ChEBI" id="CHEBI:33697"/>
    </ligand>
</feature>
<feature type="disulfide bond" description="Interchain (with C-73)" evidence="7">
    <location>
        <position position="68"/>
    </location>
</feature>
<feature type="disulfide bond" description="Interchain (with C-68)" evidence="7">
    <location>
        <position position="73"/>
    </location>
</feature>
<feature type="mutagenesis site" description="Loss of translational repressor activity." evidence="5">
    <original>R</original>
    <variation>L</variation>
    <location>
        <position position="40"/>
    </location>
</feature>
<feature type="mutagenesis site" description="Loss of translational repressor activity." evidence="5">
    <original>R</original>
    <variation>P</variation>
    <variation>S</variation>
    <variation>V</variation>
    <location>
        <position position="46"/>
    </location>
</feature>
<feature type="mutagenesis site" description="Loss of translational repressor activity." evidence="5">
    <original>A</original>
    <variation>L</variation>
    <variation>P</variation>
    <location>
        <position position="53"/>
    </location>
</feature>
<feature type="mutagenesis site" description="Loss of translational repressor activity." evidence="5">
    <original>R</original>
    <variation>E</variation>
    <variation>F</variation>
    <variation>H</variation>
    <variation>L</variation>
    <variation>T</variation>
    <location>
        <position position="55"/>
    </location>
</feature>
<feature type="mutagenesis site" description="Loss of translational repressor activity." evidence="5">
    <original>K</original>
    <variation>I</variation>
    <variation>N</variation>
    <location>
        <position position="59"/>
    </location>
</feature>
<feature type="mutagenesis site" description="Loss of translational repressor activity." evidence="5">
    <original>D</original>
    <variation>Y</variation>
    <location>
        <position position="61"/>
    </location>
</feature>
<feature type="mutagenesis site" description="Loss of translational repressor activity." evidence="5">
    <original>V</original>
    <variation>A</variation>
    <variation>H</variation>
    <variation>L</variation>
    <variation>Y</variation>
    <location>
        <position position="84"/>
    </location>
</feature>
<feature type="mutagenesis site" description="Loss of translational repressor activity." evidence="5">
    <original>S</original>
    <variation>A</variation>
    <variation>Q</variation>
    <variation>T</variation>
    <location>
        <position position="86"/>
    </location>
</feature>
<feature type="mutagenesis site" description="Loss of translational repressor activity." evidence="5">
    <original>T</original>
    <variation>A</variation>
    <variation>V</variation>
    <location>
        <position position="90"/>
    </location>
</feature>
<feature type="sequence conflict" description="In Ref. 3; AA sequence." evidence="11" ref="3">
    <original>ATSQV</original>
    <variation>VVQAT</variation>
    <location>
        <begin position="112"/>
        <end position="116"/>
    </location>
</feature>
<feature type="strand" evidence="14">
    <location>
        <begin position="4"/>
        <end position="9"/>
    </location>
</feature>
<feature type="strand" evidence="14">
    <location>
        <begin position="12"/>
        <end position="21"/>
    </location>
</feature>
<feature type="strand" evidence="14">
    <location>
        <begin position="26"/>
        <end position="29"/>
    </location>
</feature>
<feature type="strand" evidence="15">
    <location>
        <begin position="35"/>
        <end position="37"/>
    </location>
</feature>
<feature type="strand" evidence="14">
    <location>
        <begin position="40"/>
        <end position="47"/>
    </location>
</feature>
<feature type="strand" evidence="14">
    <location>
        <begin position="51"/>
        <end position="65"/>
    </location>
</feature>
<feature type="turn" evidence="13">
    <location>
        <begin position="69"/>
        <end position="71"/>
    </location>
</feature>
<feature type="strand" evidence="14">
    <location>
        <begin position="79"/>
        <end position="92"/>
    </location>
</feature>
<feature type="helix" evidence="14">
    <location>
        <begin position="97"/>
        <end position="112"/>
    </location>
</feature>
<feature type="helix" evidence="14">
    <location>
        <begin position="114"/>
        <end position="122"/>
    </location>
</feature>